<protein>
    <recommendedName>
        <fullName evidence="1">dTTP/UTP pyrophosphatase</fullName>
        <shortName evidence="1">dTTPase/UTPase</shortName>
        <ecNumber evidence="1">3.6.1.9</ecNumber>
    </recommendedName>
    <alternativeName>
        <fullName evidence="1">Nucleoside triphosphate pyrophosphatase</fullName>
    </alternativeName>
    <alternativeName>
        <fullName evidence="1">Nucleotide pyrophosphatase</fullName>
        <shortName evidence="1">Nucleotide PPase</shortName>
    </alternativeName>
</protein>
<comment type="function">
    <text evidence="1">Nucleoside triphosphate pyrophosphatase that hydrolyzes dTTP and UTP. May have a dual role in cell division arrest and in preventing the incorporation of modified nucleotides into cellular nucleic acids.</text>
</comment>
<comment type="catalytic activity">
    <reaction evidence="1">
        <text>dTTP + H2O = dTMP + diphosphate + H(+)</text>
        <dbReference type="Rhea" id="RHEA:28534"/>
        <dbReference type="ChEBI" id="CHEBI:15377"/>
        <dbReference type="ChEBI" id="CHEBI:15378"/>
        <dbReference type="ChEBI" id="CHEBI:33019"/>
        <dbReference type="ChEBI" id="CHEBI:37568"/>
        <dbReference type="ChEBI" id="CHEBI:63528"/>
        <dbReference type="EC" id="3.6.1.9"/>
    </reaction>
</comment>
<comment type="catalytic activity">
    <reaction evidence="1">
        <text>UTP + H2O = UMP + diphosphate + H(+)</text>
        <dbReference type="Rhea" id="RHEA:29395"/>
        <dbReference type="ChEBI" id="CHEBI:15377"/>
        <dbReference type="ChEBI" id="CHEBI:15378"/>
        <dbReference type="ChEBI" id="CHEBI:33019"/>
        <dbReference type="ChEBI" id="CHEBI:46398"/>
        <dbReference type="ChEBI" id="CHEBI:57865"/>
        <dbReference type="EC" id="3.6.1.9"/>
    </reaction>
</comment>
<comment type="cofactor">
    <cofactor evidence="1">
        <name>a divalent metal cation</name>
        <dbReference type="ChEBI" id="CHEBI:60240"/>
    </cofactor>
</comment>
<comment type="subcellular location">
    <subcellularLocation>
        <location evidence="1">Cytoplasm</location>
    </subcellularLocation>
</comment>
<comment type="similarity">
    <text evidence="1">Belongs to the Maf family. YhdE subfamily.</text>
</comment>
<proteinExistence type="inferred from homology"/>
<dbReference type="EC" id="3.6.1.9" evidence="1"/>
<dbReference type="EMBL" id="BA000040">
    <property type="protein sequence ID" value="BAC46524.1"/>
    <property type="molecule type" value="Genomic_DNA"/>
</dbReference>
<dbReference type="RefSeq" id="NP_767899.1">
    <property type="nucleotide sequence ID" value="NC_004463.1"/>
</dbReference>
<dbReference type="RefSeq" id="WP_011084077.1">
    <property type="nucleotide sequence ID" value="NC_004463.1"/>
</dbReference>
<dbReference type="SMR" id="Q89V00"/>
<dbReference type="FunCoup" id="Q89V00">
    <property type="interactions" value="421"/>
</dbReference>
<dbReference type="STRING" id="224911.AAV28_03190"/>
<dbReference type="EnsemblBacteria" id="BAC46524">
    <property type="protein sequence ID" value="BAC46524"/>
    <property type="gene ID" value="BAC46524"/>
</dbReference>
<dbReference type="GeneID" id="46488532"/>
<dbReference type="KEGG" id="bja:blr1259"/>
<dbReference type="PATRIC" id="fig|224911.44.peg.668"/>
<dbReference type="eggNOG" id="COG0424">
    <property type="taxonomic scope" value="Bacteria"/>
</dbReference>
<dbReference type="HOGENOM" id="CLU_040416_2_0_5"/>
<dbReference type="InParanoid" id="Q89V00"/>
<dbReference type="OrthoDB" id="9807767at2"/>
<dbReference type="PhylomeDB" id="Q89V00"/>
<dbReference type="Proteomes" id="UP000002526">
    <property type="component" value="Chromosome"/>
</dbReference>
<dbReference type="GO" id="GO:0005737">
    <property type="term" value="C:cytoplasm"/>
    <property type="evidence" value="ECO:0007669"/>
    <property type="project" value="UniProtKB-SubCell"/>
</dbReference>
<dbReference type="GO" id="GO:0036218">
    <property type="term" value="F:dTTP diphosphatase activity"/>
    <property type="evidence" value="ECO:0007669"/>
    <property type="project" value="RHEA"/>
</dbReference>
<dbReference type="GO" id="GO:0047429">
    <property type="term" value="F:nucleoside triphosphate diphosphatase activity"/>
    <property type="evidence" value="ECO:0000318"/>
    <property type="project" value="GO_Central"/>
</dbReference>
<dbReference type="GO" id="GO:0036221">
    <property type="term" value="F:UTP diphosphatase activity"/>
    <property type="evidence" value="ECO:0007669"/>
    <property type="project" value="RHEA"/>
</dbReference>
<dbReference type="GO" id="GO:0009117">
    <property type="term" value="P:nucleotide metabolic process"/>
    <property type="evidence" value="ECO:0007669"/>
    <property type="project" value="UniProtKB-KW"/>
</dbReference>
<dbReference type="CDD" id="cd00555">
    <property type="entry name" value="Maf"/>
    <property type="match status" value="1"/>
</dbReference>
<dbReference type="FunFam" id="3.90.950.10:FF:000005">
    <property type="entry name" value="7-methyl-GTP pyrophosphatase"/>
    <property type="match status" value="1"/>
</dbReference>
<dbReference type="Gene3D" id="3.90.950.10">
    <property type="match status" value="1"/>
</dbReference>
<dbReference type="HAMAP" id="MF_00528">
    <property type="entry name" value="Maf"/>
    <property type="match status" value="1"/>
</dbReference>
<dbReference type="InterPro" id="IPR029001">
    <property type="entry name" value="ITPase-like_fam"/>
</dbReference>
<dbReference type="InterPro" id="IPR003697">
    <property type="entry name" value="Maf-like"/>
</dbReference>
<dbReference type="NCBIfam" id="TIGR00172">
    <property type="entry name" value="maf"/>
    <property type="match status" value="1"/>
</dbReference>
<dbReference type="NCBIfam" id="NF002401">
    <property type="entry name" value="PRK01441.1"/>
    <property type="match status" value="1"/>
</dbReference>
<dbReference type="PANTHER" id="PTHR43213">
    <property type="entry name" value="BIFUNCTIONAL DTTP/UTP PYROPHOSPHATASE/METHYLTRANSFERASE PROTEIN-RELATED"/>
    <property type="match status" value="1"/>
</dbReference>
<dbReference type="PANTHER" id="PTHR43213:SF5">
    <property type="entry name" value="BIFUNCTIONAL DTTP_UTP PYROPHOSPHATASE_METHYLTRANSFERASE PROTEIN-RELATED"/>
    <property type="match status" value="1"/>
</dbReference>
<dbReference type="Pfam" id="PF02545">
    <property type="entry name" value="Maf"/>
    <property type="match status" value="1"/>
</dbReference>
<dbReference type="PIRSF" id="PIRSF006305">
    <property type="entry name" value="Maf"/>
    <property type="match status" value="1"/>
</dbReference>
<dbReference type="SUPFAM" id="SSF52972">
    <property type="entry name" value="ITPase-like"/>
    <property type="match status" value="1"/>
</dbReference>
<reference key="1">
    <citation type="journal article" date="2002" name="DNA Res.">
        <title>Complete genomic sequence of nitrogen-fixing symbiotic bacterium Bradyrhizobium japonicum USDA110.</title>
        <authorList>
            <person name="Kaneko T."/>
            <person name="Nakamura Y."/>
            <person name="Sato S."/>
            <person name="Minamisawa K."/>
            <person name="Uchiumi T."/>
            <person name="Sasamoto S."/>
            <person name="Watanabe A."/>
            <person name="Idesawa K."/>
            <person name="Iriguchi M."/>
            <person name="Kawashima K."/>
            <person name="Kohara M."/>
            <person name="Matsumoto M."/>
            <person name="Shimpo S."/>
            <person name="Tsuruoka H."/>
            <person name="Wada T."/>
            <person name="Yamada M."/>
            <person name="Tabata S."/>
        </authorList>
    </citation>
    <scope>NUCLEOTIDE SEQUENCE [LARGE SCALE GENOMIC DNA]</scope>
    <source>
        <strain>JCM 10833 / BCRC 13528 / IAM 13628 / NBRC 14792 / USDA 110</strain>
    </source>
</reference>
<name>NTPPA_BRADU</name>
<keyword id="KW-0963">Cytoplasm</keyword>
<keyword id="KW-0378">Hydrolase</keyword>
<keyword id="KW-0546">Nucleotide metabolism</keyword>
<keyword id="KW-1185">Reference proteome</keyword>
<feature type="chain" id="PRO_0000122999" description="dTTP/UTP pyrophosphatase">
    <location>
        <begin position="1"/>
        <end position="209"/>
    </location>
</feature>
<feature type="active site" description="Proton acceptor" evidence="1">
    <location>
        <position position="79"/>
    </location>
</feature>
<feature type="site" description="Important for substrate specificity" evidence="1">
    <location>
        <position position="15"/>
    </location>
</feature>
<feature type="site" description="Important for substrate specificity" evidence="1">
    <location>
        <position position="80"/>
    </location>
</feature>
<feature type="site" description="Important for substrate specificity" evidence="1">
    <location>
        <position position="163"/>
    </location>
</feature>
<sequence length="209" mass="22707">MLGRPKFVLASGSPRRLSLLNQAGIEPDALRPADVDETPKRGELPRACANRLARAKADAALKSVQLDDELRGAFILSADTVVAVGRRILPKANLVDEAAQCLRLLSGRNHRVYTAICLVTPREAFRQRLVETRVRFKRLSEDDIQAYIGSGEWRGKAGGYAVQGIAGSFVVKMVGSYSNVVGLPLYETTTLLGGEGFPIRFGWLNATAV</sequence>
<evidence type="ECO:0000255" key="1">
    <source>
        <dbReference type="HAMAP-Rule" id="MF_00528"/>
    </source>
</evidence>
<accession>Q89V00</accession>
<organism>
    <name type="scientific">Bradyrhizobium diazoefficiens (strain JCM 10833 / BCRC 13528 / IAM 13628 / NBRC 14792 / USDA 110)</name>
    <dbReference type="NCBI Taxonomy" id="224911"/>
    <lineage>
        <taxon>Bacteria</taxon>
        <taxon>Pseudomonadati</taxon>
        <taxon>Pseudomonadota</taxon>
        <taxon>Alphaproteobacteria</taxon>
        <taxon>Hyphomicrobiales</taxon>
        <taxon>Nitrobacteraceae</taxon>
        <taxon>Bradyrhizobium</taxon>
    </lineage>
</organism>
<gene>
    <name type="ordered locus">blr1259</name>
</gene>